<sequence>MSKHFFLHNEFHWQGRHDAEDGAAGSRVHHVVQQIDYTHIGENPYGVALLGFACDAGVARNKGRIGAKKSPDLIRRALANLAWHSPHPLYDLGTVVCDDDLLESSQQHCAKMIAEVLPSVPVITLGGGHEVAWASFSGLARYFEQHHPEKAPKIGIINFDAHFDLRAFSSSQADIKPSSGTPFNQIQHYCQQQGWDFHYACLGVSKASNTRALFERAEQLNVWFVEDKDLGSVNHDYHLTQLQHFIDDCDYLYLTIDLDVFPAATAPGVSAPAARGVSYDNLAPFLDRILAHRDKLMLADIAEYNPTYDVDSQTARLAARLCWDIANAMNDKLEHQ</sequence>
<accession>Q8DA19</accession>
<feature type="chain" id="PRO_0000173781" description="Formimidoylglutamase">
    <location>
        <begin position="1"/>
        <end position="336"/>
    </location>
</feature>
<feature type="binding site" evidence="1">
    <location>
        <position position="129"/>
    </location>
    <ligand>
        <name>Mn(2+)</name>
        <dbReference type="ChEBI" id="CHEBI:29035"/>
        <label>1</label>
    </ligand>
</feature>
<feature type="binding site" evidence="1">
    <location>
        <position position="160"/>
    </location>
    <ligand>
        <name>Mn(2+)</name>
        <dbReference type="ChEBI" id="CHEBI:29035"/>
        <label>1</label>
    </ligand>
</feature>
<feature type="binding site" evidence="1">
    <location>
        <position position="160"/>
    </location>
    <ligand>
        <name>Mn(2+)</name>
        <dbReference type="ChEBI" id="CHEBI:29035"/>
        <label>2</label>
    </ligand>
</feature>
<feature type="binding site" evidence="1">
    <location>
        <position position="162"/>
    </location>
    <ligand>
        <name>Mn(2+)</name>
        <dbReference type="ChEBI" id="CHEBI:29035"/>
        <label>2</label>
    </ligand>
</feature>
<feature type="binding site" evidence="1">
    <location>
        <position position="164"/>
    </location>
    <ligand>
        <name>Mn(2+)</name>
        <dbReference type="ChEBI" id="CHEBI:29035"/>
        <label>1</label>
    </ligand>
</feature>
<feature type="binding site" evidence="1">
    <location>
        <position position="257"/>
    </location>
    <ligand>
        <name>Mn(2+)</name>
        <dbReference type="ChEBI" id="CHEBI:29035"/>
        <label>1</label>
    </ligand>
</feature>
<feature type="binding site" evidence="1">
    <location>
        <position position="257"/>
    </location>
    <ligand>
        <name>Mn(2+)</name>
        <dbReference type="ChEBI" id="CHEBI:29035"/>
        <label>2</label>
    </ligand>
</feature>
<feature type="binding site" evidence="1">
    <location>
        <position position="259"/>
    </location>
    <ligand>
        <name>Mn(2+)</name>
        <dbReference type="ChEBI" id="CHEBI:29035"/>
        <label>2</label>
    </ligand>
</feature>
<reference key="1">
    <citation type="submission" date="2002-12" db="EMBL/GenBank/DDBJ databases">
        <title>Complete genome sequence of Vibrio vulnificus CMCP6.</title>
        <authorList>
            <person name="Rhee J.H."/>
            <person name="Kim S.Y."/>
            <person name="Chung S.S."/>
            <person name="Kim J.J."/>
            <person name="Moon Y.H."/>
            <person name="Jeong H."/>
            <person name="Choy H.E."/>
        </authorList>
    </citation>
    <scope>NUCLEOTIDE SEQUENCE [LARGE SCALE GENOMIC DNA]</scope>
    <source>
        <strain>CMCP6</strain>
    </source>
</reference>
<name>HUTG_VIBVU</name>
<protein>
    <recommendedName>
        <fullName evidence="1">Formimidoylglutamase</fullName>
        <ecNumber evidence="1">3.5.3.8</ecNumber>
    </recommendedName>
    <alternativeName>
        <fullName evidence="1">Formiminoglutamase</fullName>
    </alternativeName>
    <alternativeName>
        <fullName evidence="1">Formiminoglutamate hydrolase</fullName>
    </alternativeName>
</protein>
<proteinExistence type="inferred from homology"/>
<gene>
    <name evidence="1" type="primary">hutG</name>
    <name type="ordered locus">VV1_2391</name>
</gene>
<organism>
    <name type="scientific">Vibrio vulnificus (strain CMCP6)</name>
    <dbReference type="NCBI Taxonomy" id="216895"/>
    <lineage>
        <taxon>Bacteria</taxon>
        <taxon>Pseudomonadati</taxon>
        <taxon>Pseudomonadota</taxon>
        <taxon>Gammaproteobacteria</taxon>
        <taxon>Vibrionales</taxon>
        <taxon>Vibrionaceae</taxon>
        <taxon>Vibrio</taxon>
    </lineage>
</organism>
<evidence type="ECO:0000255" key="1">
    <source>
        <dbReference type="HAMAP-Rule" id="MF_00737"/>
    </source>
</evidence>
<keyword id="KW-0369">Histidine metabolism</keyword>
<keyword id="KW-0378">Hydrolase</keyword>
<keyword id="KW-0464">Manganese</keyword>
<keyword id="KW-0479">Metal-binding</keyword>
<dbReference type="EC" id="3.5.3.8" evidence="1"/>
<dbReference type="EMBL" id="AE016795">
    <property type="protein sequence ID" value="AAO10765.1"/>
    <property type="molecule type" value="Genomic_DNA"/>
</dbReference>
<dbReference type="RefSeq" id="WP_011080258.1">
    <property type="nucleotide sequence ID" value="NC_004459.3"/>
</dbReference>
<dbReference type="SMR" id="Q8DA19"/>
<dbReference type="KEGG" id="vvu:VV1_2391"/>
<dbReference type="HOGENOM" id="CLU_039478_2_0_6"/>
<dbReference type="UniPathway" id="UPA00379">
    <property type="reaction ID" value="UER00552"/>
</dbReference>
<dbReference type="Proteomes" id="UP000002275">
    <property type="component" value="Chromosome 1"/>
</dbReference>
<dbReference type="GO" id="GO:0008783">
    <property type="term" value="F:agmatinase activity"/>
    <property type="evidence" value="ECO:0007669"/>
    <property type="project" value="TreeGrafter"/>
</dbReference>
<dbReference type="GO" id="GO:0050415">
    <property type="term" value="F:formimidoylglutamase activity"/>
    <property type="evidence" value="ECO:0007669"/>
    <property type="project" value="UniProtKB-UniRule"/>
</dbReference>
<dbReference type="GO" id="GO:0030145">
    <property type="term" value="F:manganese ion binding"/>
    <property type="evidence" value="ECO:0007669"/>
    <property type="project" value="UniProtKB-UniRule"/>
</dbReference>
<dbReference type="GO" id="GO:0019556">
    <property type="term" value="P:L-histidine catabolic process to glutamate and formamide"/>
    <property type="evidence" value="ECO:0007669"/>
    <property type="project" value="UniProtKB-UniPathway"/>
</dbReference>
<dbReference type="GO" id="GO:0019557">
    <property type="term" value="P:L-histidine catabolic process to glutamate and formate"/>
    <property type="evidence" value="ECO:0007669"/>
    <property type="project" value="UniProtKB-UniPathway"/>
</dbReference>
<dbReference type="GO" id="GO:0033389">
    <property type="term" value="P:putrescine biosynthetic process from arginine, via agmatine"/>
    <property type="evidence" value="ECO:0007669"/>
    <property type="project" value="TreeGrafter"/>
</dbReference>
<dbReference type="CDD" id="cd09988">
    <property type="entry name" value="Formimidoylglutamase"/>
    <property type="match status" value="1"/>
</dbReference>
<dbReference type="Gene3D" id="3.40.800.10">
    <property type="entry name" value="Ureohydrolase domain"/>
    <property type="match status" value="1"/>
</dbReference>
<dbReference type="HAMAP" id="MF_00737">
    <property type="entry name" value="Formimidoylglutam"/>
    <property type="match status" value="1"/>
</dbReference>
<dbReference type="InterPro" id="IPR005923">
    <property type="entry name" value="HutG"/>
</dbReference>
<dbReference type="InterPro" id="IPR006035">
    <property type="entry name" value="Ureohydrolase"/>
</dbReference>
<dbReference type="InterPro" id="IPR023696">
    <property type="entry name" value="Ureohydrolase_dom_sf"/>
</dbReference>
<dbReference type="InterPro" id="IPR020855">
    <property type="entry name" value="Ureohydrolase_Mn_BS"/>
</dbReference>
<dbReference type="NCBIfam" id="TIGR01227">
    <property type="entry name" value="hutG"/>
    <property type="match status" value="1"/>
</dbReference>
<dbReference type="PANTHER" id="PTHR11358">
    <property type="entry name" value="ARGINASE/AGMATINASE"/>
    <property type="match status" value="1"/>
</dbReference>
<dbReference type="PANTHER" id="PTHR11358:SF35">
    <property type="entry name" value="FORMIMIDOYLGLUTAMASE"/>
    <property type="match status" value="1"/>
</dbReference>
<dbReference type="Pfam" id="PF00491">
    <property type="entry name" value="Arginase"/>
    <property type="match status" value="1"/>
</dbReference>
<dbReference type="PIRSF" id="PIRSF036979">
    <property type="entry name" value="Arginase"/>
    <property type="match status" value="1"/>
</dbReference>
<dbReference type="PRINTS" id="PR00116">
    <property type="entry name" value="ARGINASE"/>
</dbReference>
<dbReference type="SUPFAM" id="SSF52768">
    <property type="entry name" value="Arginase/deacetylase"/>
    <property type="match status" value="1"/>
</dbReference>
<dbReference type="PROSITE" id="PS01053">
    <property type="entry name" value="ARGINASE_1"/>
    <property type="match status" value="1"/>
</dbReference>
<dbReference type="PROSITE" id="PS51409">
    <property type="entry name" value="ARGINASE_2"/>
    <property type="match status" value="1"/>
</dbReference>
<comment type="function">
    <text evidence="1">Catalyzes the conversion of N-formimidoyl-L-glutamate to L-glutamate and formamide.</text>
</comment>
<comment type="catalytic activity">
    <reaction evidence="1">
        <text>N-formimidoyl-L-glutamate + H2O = formamide + L-glutamate</text>
        <dbReference type="Rhea" id="RHEA:22492"/>
        <dbReference type="ChEBI" id="CHEBI:15377"/>
        <dbReference type="ChEBI" id="CHEBI:16397"/>
        <dbReference type="ChEBI" id="CHEBI:29985"/>
        <dbReference type="ChEBI" id="CHEBI:58928"/>
        <dbReference type="EC" id="3.5.3.8"/>
    </reaction>
</comment>
<comment type="cofactor">
    <cofactor evidence="1">
        <name>Mn(2+)</name>
        <dbReference type="ChEBI" id="CHEBI:29035"/>
    </cofactor>
    <text evidence="1">Binds 2 manganese ions per subunit.</text>
</comment>
<comment type="pathway">
    <text evidence="1">Amino-acid degradation; L-histidine degradation into L-glutamate; L-glutamate from N-formimidoyl-L-glutamate (hydrolase route): step 1/1.</text>
</comment>
<comment type="similarity">
    <text evidence="1">Belongs to the arginase family.</text>
</comment>